<sequence length="370" mass="41218">MVSITEQTAILAKYLDLSQNGKVLAEYVWIDADGNSRSKCKTLDKKPSSVEDLPEWNFDGSSTGQAPGHDSDVYLRPVAFYADPFRKGDNIIVLTECWNNDGTPNKFNHRHESAKLMKAHADEEVWFGLEQEYTLFDQFDQPYAWPKGGFPAPQGPYYCGVGTGKVYARDLIEAHYRACLHAGVDISGINAEVMPSQWEFQVGPCEGIQMGDELWIARYLLQRVAEEFGVKVSFHPKPLKGEWNGAGCHTNVSTKSMRLPGGMKSIEVALSKLAKRHKEHMLLYGADNDQRLTGRHETASIEGFSSGVANRGASVRIPRSVAKEGYGYFEDRRPASNIDPYLVTGIMVETICGSIPDADMFKEYARESSD</sequence>
<evidence type="ECO:0000250" key="1"/>
<evidence type="ECO:0000255" key="2">
    <source>
        <dbReference type="PROSITE-ProRule" id="PRU01330"/>
    </source>
</evidence>
<evidence type="ECO:0000255" key="3">
    <source>
        <dbReference type="PROSITE-ProRule" id="PRU01331"/>
    </source>
</evidence>
<evidence type="ECO:0000256" key="4">
    <source>
        <dbReference type="SAM" id="MobiDB-lite"/>
    </source>
</evidence>
<evidence type="ECO:0000305" key="5"/>
<name>GLNA_DEBHA</name>
<protein>
    <recommendedName>
        <fullName>Glutamine synthetase</fullName>
        <shortName>GS</shortName>
        <ecNumber>6.3.1.2</ecNumber>
    </recommendedName>
    <alternativeName>
        <fullName>Glutamate--ammonia ligase</fullName>
    </alternativeName>
</protein>
<organism>
    <name type="scientific">Debaryomyces hansenii (strain ATCC 36239 / CBS 767 / BCRC 21394 / JCM 1990 / NBRC 0083 / IGC 2968)</name>
    <name type="common">Yeast</name>
    <name type="synonym">Torulaspora hansenii</name>
    <dbReference type="NCBI Taxonomy" id="284592"/>
    <lineage>
        <taxon>Eukaryota</taxon>
        <taxon>Fungi</taxon>
        <taxon>Dikarya</taxon>
        <taxon>Ascomycota</taxon>
        <taxon>Saccharomycotina</taxon>
        <taxon>Pichiomycetes</taxon>
        <taxon>Debaryomycetaceae</taxon>
        <taxon>Debaryomyces</taxon>
    </lineage>
</organism>
<comment type="catalytic activity">
    <reaction>
        <text>L-glutamate + NH4(+) + ATP = L-glutamine + ADP + phosphate + H(+)</text>
        <dbReference type="Rhea" id="RHEA:16169"/>
        <dbReference type="ChEBI" id="CHEBI:15378"/>
        <dbReference type="ChEBI" id="CHEBI:28938"/>
        <dbReference type="ChEBI" id="CHEBI:29985"/>
        <dbReference type="ChEBI" id="CHEBI:30616"/>
        <dbReference type="ChEBI" id="CHEBI:43474"/>
        <dbReference type="ChEBI" id="CHEBI:58359"/>
        <dbReference type="ChEBI" id="CHEBI:456216"/>
        <dbReference type="EC" id="6.3.1.2"/>
    </reaction>
</comment>
<comment type="subunit">
    <text evidence="1">Homooctamer.</text>
</comment>
<comment type="subcellular location">
    <subcellularLocation>
        <location>Cytoplasm</location>
    </subcellularLocation>
</comment>
<comment type="similarity">
    <text evidence="5">Belongs to the glutamine synthetase family.</text>
</comment>
<keyword id="KW-0067">ATP-binding</keyword>
<keyword id="KW-0963">Cytoplasm</keyword>
<keyword id="KW-0436">Ligase</keyword>
<keyword id="KW-0547">Nucleotide-binding</keyword>
<keyword id="KW-1185">Reference proteome</keyword>
<proteinExistence type="inferred from homology"/>
<gene>
    <name type="primary">GLN1</name>
    <name type="ordered locus">DEHA2G19140g</name>
</gene>
<feature type="chain" id="PRO_0000153155" description="Glutamine synthetase">
    <location>
        <begin position="1"/>
        <end position="370"/>
    </location>
</feature>
<feature type="domain" description="GS beta-grasp" evidence="2">
    <location>
        <begin position="23"/>
        <end position="102"/>
    </location>
</feature>
<feature type="domain" description="GS catalytic" evidence="3">
    <location>
        <begin position="109"/>
        <end position="370"/>
    </location>
</feature>
<feature type="region of interest" description="Disordered" evidence="4">
    <location>
        <begin position="40"/>
        <end position="69"/>
    </location>
</feature>
<accession>Q6B4U7</accession>
<accession>Q6BHF0</accession>
<dbReference type="EC" id="6.3.1.2"/>
<dbReference type="EMBL" id="AY680952">
    <property type="protein sequence ID" value="AAT80871.1"/>
    <property type="molecule type" value="Genomic_DNA"/>
</dbReference>
<dbReference type="EMBL" id="CR382139">
    <property type="protein sequence ID" value="CAG90878.1"/>
    <property type="molecule type" value="Genomic_DNA"/>
</dbReference>
<dbReference type="RefSeq" id="XP_462371.1">
    <property type="nucleotide sequence ID" value="XM_462371.1"/>
</dbReference>
<dbReference type="SMR" id="Q6B4U7"/>
<dbReference type="FunCoup" id="Q6B4U7">
    <property type="interactions" value="828"/>
</dbReference>
<dbReference type="STRING" id="284592.Q6B4U7"/>
<dbReference type="GeneID" id="2905313"/>
<dbReference type="KEGG" id="dha:DEHA2G19140g"/>
<dbReference type="VEuPathDB" id="FungiDB:DEHA2G19140g"/>
<dbReference type="eggNOG" id="KOG0683">
    <property type="taxonomic scope" value="Eukaryota"/>
</dbReference>
<dbReference type="HOGENOM" id="CLU_036762_1_1_1"/>
<dbReference type="InParanoid" id="Q6B4U7"/>
<dbReference type="OMA" id="DRRPNAN"/>
<dbReference type="OrthoDB" id="1936100at2759"/>
<dbReference type="Proteomes" id="UP000000599">
    <property type="component" value="Chromosome G"/>
</dbReference>
<dbReference type="GO" id="GO:0005737">
    <property type="term" value="C:cytoplasm"/>
    <property type="evidence" value="ECO:0007669"/>
    <property type="project" value="UniProtKB-SubCell"/>
</dbReference>
<dbReference type="GO" id="GO:0005524">
    <property type="term" value="F:ATP binding"/>
    <property type="evidence" value="ECO:0007669"/>
    <property type="project" value="UniProtKB-KW"/>
</dbReference>
<dbReference type="GO" id="GO:0004356">
    <property type="term" value="F:glutamine synthetase activity"/>
    <property type="evidence" value="ECO:0007669"/>
    <property type="project" value="UniProtKB-EC"/>
</dbReference>
<dbReference type="GO" id="GO:0006542">
    <property type="term" value="P:glutamine biosynthetic process"/>
    <property type="evidence" value="ECO:0007669"/>
    <property type="project" value="InterPro"/>
</dbReference>
<dbReference type="FunFam" id="3.10.20.70:FF:000004">
    <property type="entry name" value="Glutamine synthetase"/>
    <property type="match status" value="1"/>
</dbReference>
<dbReference type="FunFam" id="3.30.590.10:FF:000004">
    <property type="entry name" value="Glutamine synthetase"/>
    <property type="match status" value="1"/>
</dbReference>
<dbReference type="Gene3D" id="3.10.20.70">
    <property type="entry name" value="Glutamine synthetase, N-terminal domain"/>
    <property type="match status" value="1"/>
</dbReference>
<dbReference type="Gene3D" id="3.30.590.10">
    <property type="entry name" value="Glutamine synthetase/guanido kinase, catalytic domain"/>
    <property type="match status" value="1"/>
</dbReference>
<dbReference type="InterPro" id="IPR008147">
    <property type="entry name" value="Gln_synt_N"/>
</dbReference>
<dbReference type="InterPro" id="IPR036651">
    <property type="entry name" value="Gln_synt_N_sf"/>
</dbReference>
<dbReference type="InterPro" id="IPR014746">
    <property type="entry name" value="Gln_synth/guanido_kin_cat_dom"/>
</dbReference>
<dbReference type="InterPro" id="IPR008146">
    <property type="entry name" value="Gln_synth_cat_dom"/>
</dbReference>
<dbReference type="InterPro" id="IPR027303">
    <property type="entry name" value="Gln_synth_gly_rich_site"/>
</dbReference>
<dbReference type="InterPro" id="IPR027302">
    <property type="entry name" value="Gln_synth_N_conserv_site"/>
</dbReference>
<dbReference type="InterPro" id="IPR050292">
    <property type="entry name" value="Glutamine_Synthetase"/>
</dbReference>
<dbReference type="PANTHER" id="PTHR20852">
    <property type="entry name" value="GLUTAMINE SYNTHETASE"/>
    <property type="match status" value="1"/>
</dbReference>
<dbReference type="PANTHER" id="PTHR20852:SF57">
    <property type="entry name" value="GLUTAMINE SYNTHETASE 2 CYTOPLASMIC"/>
    <property type="match status" value="1"/>
</dbReference>
<dbReference type="Pfam" id="PF00120">
    <property type="entry name" value="Gln-synt_C"/>
    <property type="match status" value="1"/>
</dbReference>
<dbReference type="Pfam" id="PF03951">
    <property type="entry name" value="Gln-synt_N"/>
    <property type="match status" value="1"/>
</dbReference>
<dbReference type="SMART" id="SM01230">
    <property type="entry name" value="Gln-synt_C"/>
    <property type="match status" value="1"/>
</dbReference>
<dbReference type="SUPFAM" id="SSF54368">
    <property type="entry name" value="Glutamine synthetase, N-terminal domain"/>
    <property type="match status" value="1"/>
</dbReference>
<dbReference type="SUPFAM" id="SSF55931">
    <property type="entry name" value="Glutamine synthetase/guanido kinase"/>
    <property type="match status" value="1"/>
</dbReference>
<dbReference type="PROSITE" id="PS00180">
    <property type="entry name" value="GLNA_1"/>
    <property type="match status" value="1"/>
</dbReference>
<dbReference type="PROSITE" id="PS00181">
    <property type="entry name" value="GLNA_ATP"/>
    <property type="match status" value="1"/>
</dbReference>
<dbReference type="PROSITE" id="PS51986">
    <property type="entry name" value="GS_BETA_GRASP"/>
    <property type="match status" value="1"/>
</dbReference>
<dbReference type="PROSITE" id="PS51987">
    <property type="entry name" value="GS_CATALYTIC"/>
    <property type="match status" value="1"/>
</dbReference>
<reference key="1">
    <citation type="submission" date="2004-08" db="EMBL/GenBank/DDBJ databases">
        <title>Isolation and sequencing of the GS gene from Debaryomyces hansenii Y7426.</title>
        <authorList>
            <person name="Guerrero C.A."/>
            <person name="Aranda C."/>
            <person name="Gonzalez A."/>
        </authorList>
    </citation>
    <scope>NUCLEOTIDE SEQUENCE [GENOMIC DNA]</scope>
    <source>
        <strain>Y7426</strain>
    </source>
</reference>
<reference key="2">
    <citation type="journal article" date="2004" name="Nature">
        <title>Genome evolution in yeasts.</title>
        <authorList>
            <person name="Dujon B."/>
            <person name="Sherman D."/>
            <person name="Fischer G."/>
            <person name="Durrens P."/>
            <person name="Casaregola S."/>
            <person name="Lafontaine I."/>
            <person name="de Montigny J."/>
            <person name="Marck C."/>
            <person name="Neuveglise C."/>
            <person name="Talla E."/>
            <person name="Goffard N."/>
            <person name="Frangeul L."/>
            <person name="Aigle M."/>
            <person name="Anthouard V."/>
            <person name="Babour A."/>
            <person name="Barbe V."/>
            <person name="Barnay S."/>
            <person name="Blanchin S."/>
            <person name="Beckerich J.-M."/>
            <person name="Beyne E."/>
            <person name="Bleykasten C."/>
            <person name="Boisrame A."/>
            <person name="Boyer J."/>
            <person name="Cattolico L."/>
            <person name="Confanioleri F."/>
            <person name="de Daruvar A."/>
            <person name="Despons L."/>
            <person name="Fabre E."/>
            <person name="Fairhead C."/>
            <person name="Ferry-Dumazet H."/>
            <person name="Groppi A."/>
            <person name="Hantraye F."/>
            <person name="Hennequin C."/>
            <person name="Jauniaux N."/>
            <person name="Joyet P."/>
            <person name="Kachouri R."/>
            <person name="Kerrest A."/>
            <person name="Koszul R."/>
            <person name="Lemaire M."/>
            <person name="Lesur I."/>
            <person name="Ma L."/>
            <person name="Muller H."/>
            <person name="Nicaud J.-M."/>
            <person name="Nikolski M."/>
            <person name="Oztas S."/>
            <person name="Ozier-Kalogeropoulos O."/>
            <person name="Pellenz S."/>
            <person name="Potier S."/>
            <person name="Richard G.-F."/>
            <person name="Straub M.-L."/>
            <person name="Suleau A."/>
            <person name="Swennen D."/>
            <person name="Tekaia F."/>
            <person name="Wesolowski-Louvel M."/>
            <person name="Westhof E."/>
            <person name="Wirth B."/>
            <person name="Zeniou-Meyer M."/>
            <person name="Zivanovic Y."/>
            <person name="Bolotin-Fukuhara M."/>
            <person name="Thierry A."/>
            <person name="Bouchier C."/>
            <person name="Caudron B."/>
            <person name="Scarpelli C."/>
            <person name="Gaillardin C."/>
            <person name="Weissenbach J."/>
            <person name="Wincker P."/>
            <person name="Souciet J.-L."/>
        </authorList>
    </citation>
    <scope>NUCLEOTIDE SEQUENCE [LARGE SCALE GENOMIC DNA]</scope>
    <source>
        <strain>ATCC 36239 / CBS 767 / BCRC 21394 / JCM 1990 / NBRC 0083 / IGC 2968</strain>
    </source>
</reference>